<dbReference type="EC" id="3.6.1.41" evidence="1"/>
<dbReference type="EMBL" id="CP001048">
    <property type="protein sequence ID" value="ACC87638.1"/>
    <property type="molecule type" value="Genomic_DNA"/>
</dbReference>
<dbReference type="RefSeq" id="WP_011191708.1">
    <property type="nucleotide sequence ID" value="NZ_CP009780.1"/>
</dbReference>
<dbReference type="SMR" id="B2K485"/>
<dbReference type="GeneID" id="49787366"/>
<dbReference type="KEGG" id="ypb:YPTS_0654"/>
<dbReference type="PATRIC" id="fig|502801.10.peg.4339"/>
<dbReference type="GO" id="GO:0008803">
    <property type="term" value="F:bis(5'-nucleosyl)-tetraphosphatase (symmetrical) activity"/>
    <property type="evidence" value="ECO:0007669"/>
    <property type="project" value="UniProtKB-UniRule"/>
</dbReference>
<dbReference type="CDD" id="cd07422">
    <property type="entry name" value="MPP_ApaH"/>
    <property type="match status" value="1"/>
</dbReference>
<dbReference type="FunFam" id="3.60.21.10:FF:000013">
    <property type="entry name" value="Bis(5'-nucleosyl)-tetraphosphatase, symmetrical"/>
    <property type="match status" value="1"/>
</dbReference>
<dbReference type="Gene3D" id="3.60.21.10">
    <property type="match status" value="1"/>
</dbReference>
<dbReference type="HAMAP" id="MF_00199">
    <property type="entry name" value="ApaH"/>
    <property type="match status" value="1"/>
</dbReference>
<dbReference type="InterPro" id="IPR004617">
    <property type="entry name" value="ApaH"/>
</dbReference>
<dbReference type="InterPro" id="IPR004843">
    <property type="entry name" value="Calcineurin-like_PHP_ApaH"/>
</dbReference>
<dbReference type="InterPro" id="IPR029052">
    <property type="entry name" value="Metallo-depent_PP-like"/>
</dbReference>
<dbReference type="NCBIfam" id="TIGR00668">
    <property type="entry name" value="apaH"/>
    <property type="match status" value="1"/>
</dbReference>
<dbReference type="NCBIfam" id="NF001204">
    <property type="entry name" value="PRK00166.1"/>
    <property type="match status" value="1"/>
</dbReference>
<dbReference type="PANTHER" id="PTHR40942">
    <property type="match status" value="1"/>
</dbReference>
<dbReference type="PANTHER" id="PTHR40942:SF4">
    <property type="entry name" value="CYTOCHROME C5"/>
    <property type="match status" value="1"/>
</dbReference>
<dbReference type="Pfam" id="PF00149">
    <property type="entry name" value="Metallophos"/>
    <property type="match status" value="1"/>
</dbReference>
<dbReference type="PIRSF" id="PIRSF000903">
    <property type="entry name" value="B5n-ttraPtase_sm"/>
    <property type="match status" value="1"/>
</dbReference>
<dbReference type="SUPFAM" id="SSF56300">
    <property type="entry name" value="Metallo-dependent phosphatases"/>
    <property type="match status" value="1"/>
</dbReference>
<comment type="function">
    <text evidence="1">Hydrolyzes diadenosine 5',5'''-P1,P4-tetraphosphate to yield ADP.</text>
</comment>
<comment type="catalytic activity">
    <reaction evidence="1">
        <text>P(1),P(4)-bis(5'-adenosyl) tetraphosphate + H2O = 2 ADP + 2 H(+)</text>
        <dbReference type="Rhea" id="RHEA:24252"/>
        <dbReference type="ChEBI" id="CHEBI:15377"/>
        <dbReference type="ChEBI" id="CHEBI:15378"/>
        <dbReference type="ChEBI" id="CHEBI:58141"/>
        <dbReference type="ChEBI" id="CHEBI:456216"/>
        <dbReference type="EC" id="3.6.1.41"/>
    </reaction>
</comment>
<comment type="similarity">
    <text evidence="1">Belongs to the Ap4A hydrolase family.</text>
</comment>
<keyword id="KW-0378">Hydrolase</keyword>
<name>APAH_YERPB</name>
<feature type="chain" id="PRO_1000099342" description="Bis(5'-nucleosyl)-tetraphosphatase, symmetrical">
    <location>
        <begin position="1"/>
        <end position="289"/>
    </location>
</feature>
<accession>B2K485</accession>
<organism>
    <name type="scientific">Yersinia pseudotuberculosis serotype IB (strain PB1/+)</name>
    <dbReference type="NCBI Taxonomy" id="502801"/>
    <lineage>
        <taxon>Bacteria</taxon>
        <taxon>Pseudomonadati</taxon>
        <taxon>Pseudomonadota</taxon>
        <taxon>Gammaproteobacteria</taxon>
        <taxon>Enterobacterales</taxon>
        <taxon>Yersiniaceae</taxon>
        <taxon>Yersinia</taxon>
    </lineage>
</organism>
<sequence>MSTYLIGDIHGCLDELLALLAQVNFDPQQDTLWLTGDLVARGPASLDVLRYVRSLGPAVRMVLGNHDLHLLAVYAGISRNKPKDRITPLLDAPDADELINWLRRQPVLQVDDQLKLIMAHAGITPQWDIETAKMCAREVEAVLSSDSYPLFLDAMYGDMPNNWSPELTGLARLRFSTNALTRMRFCFPNGQLDMICKDTPENAPAPLKPWFDLPRLVDPEYSIIFGHWASLEGKGVPEGIYGLDTGCCWGGDLTLLRWEDKRYFTQRAFKAEAEINNNNGFAAGEEVQH</sequence>
<gene>
    <name evidence="1" type="primary">apaH</name>
    <name type="ordered locus">YPTS_0654</name>
</gene>
<reference key="1">
    <citation type="submission" date="2008-04" db="EMBL/GenBank/DDBJ databases">
        <title>Complete sequence of Yersinia pseudotuberculosis PB1/+.</title>
        <authorList>
            <person name="Copeland A."/>
            <person name="Lucas S."/>
            <person name="Lapidus A."/>
            <person name="Glavina del Rio T."/>
            <person name="Dalin E."/>
            <person name="Tice H."/>
            <person name="Bruce D."/>
            <person name="Goodwin L."/>
            <person name="Pitluck S."/>
            <person name="Munk A.C."/>
            <person name="Brettin T."/>
            <person name="Detter J.C."/>
            <person name="Han C."/>
            <person name="Tapia R."/>
            <person name="Schmutz J."/>
            <person name="Larimer F."/>
            <person name="Land M."/>
            <person name="Hauser L."/>
            <person name="Challacombe J.F."/>
            <person name="Green L."/>
            <person name="Lindler L.E."/>
            <person name="Nikolich M.P."/>
            <person name="Richardson P."/>
        </authorList>
    </citation>
    <scope>NUCLEOTIDE SEQUENCE [LARGE SCALE GENOMIC DNA]</scope>
    <source>
        <strain>PB1/+</strain>
    </source>
</reference>
<protein>
    <recommendedName>
        <fullName evidence="1">Bis(5'-nucleosyl)-tetraphosphatase, symmetrical</fullName>
        <ecNumber evidence="1">3.6.1.41</ecNumber>
    </recommendedName>
    <alternativeName>
        <fullName evidence="1">Ap4A hydrolase</fullName>
    </alternativeName>
    <alternativeName>
        <fullName evidence="1">Diadenosine 5',5'''-P1,P4-tetraphosphate pyrophosphohydrolase</fullName>
    </alternativeName>
    <alternativeName>
        <fullName evidence="1">Diadenosine tetraphosphatase</fullName>
    </alternativeName>
</protein>
<evidence type="ECO:0000255" key="1">
    <source>
        <dbReference type="HAMAP-Rule" id="MF_00199"/>
    </source>
</evidence>
<proteinExistence type="inferred from homology"/>